<accession>Q5UX65</accession>
<comment type="function">
    <text evidence="1">Catalyzes the attachment of threonine to tRNA(Thr) in a two-step reaction: L-threonine is first activated by ATP to form Thr-AMP and then transferred to the acceptor end of tRNA(Thr).</text>
</comment>
<comment type="catalytic activity">
    <reaction evidence="1">
        <text>tRNA(Thr) + L-threonine + ATP = L-threonyl-tRNA(Thr) + AMP + diphosphate + H(+)</text>
        <dbReference type="Rhea" id="RHEA:24624"/>
        <dbReference type="Rhea" id="RHEA-COMP:9670"/>
        <dbReference type="Rhea" id="RHEA-COMP:9704"/>
        <dbReference type="ChEBI" id="CHEBI:15378"/>
        <dbReference type="ChEBI" id="CHEBI:30616"/>
        <dbReference type="ChEBI" id="CHEBI:33019"/>
        <dbReference type="ChEBI" id="CHEBI:57926"/>
        <dbReference type="ChEBI" id="CHEBI:78442"/>
        <dbReference type="ChEBI" id="CHEBI:78534"/>
        <dbReference type="ChEBI" id="CHEBI:456215"/>
        <dbReference type="EC" id="6.1.1.3"/>
    </reaction>
</comment>
<comment type="cofactor">
    <cofactor evidence="1">
        <name>Zn(2+)</name>
        <dbReference type="ChEBI" id="CHEBI:29105"/>
    </cofactor>
    <text evidence="1">Binds 1 zinc ion per subunit.</text>
</comment>
<comment type="subunit">
    <text evidence="1">Homodimer.</text>
</comment>
<comment type="subcellular location">
    <subcellularLocation>
        <location evidence="1">Cytoplasm</location>
    </subcellularLocation>
</comment>
<comment type="similarity">
    <text evidence="1">Belongs to the class-II aminoacyl-tRNA synthetase family.</text>
</comment>
<comment type="sequence caution" evidence="3">
    <conflict type="erroneous initiation">
        <sequence resource="EMBL-CDS" id="AAV48138"/>
    </conflict>
    <text>Extended N-terminus.</text>
</comment>
<organism>
    <name type="scientific">Haloarcula marismortui (strain ATCC 43049 / DSM 3752 / JCM 8966 / VKM B-1809)</name>
    <name type="common">Halobacterium marismortui</name>
    <dbReference type="NCBI Taxonomy" id="272569"/>
    <lineage>
        <taxon>Archaea</taxon>
        <taxon>Methanobacteriati</taxon>
        <taxon>Methanobacteriota</taxon>
        <taxon>Stenosarchaea group</taxon>
        <taxon>Halobacteria</taxon>
        <taxon>Halobacteriales</taxon>
        <taxon>Haloarculaceae</taxon>
        <taxon>Haloarcula</taxon>
    </lineage>
</organism>
<keyword id="KW-0030">Aminoacyl-tRNA synthetase</keyword>
<keyword id="KW-0067">ATP-binding</keyword>
<keyword id="KW-0963">Cytoplasm</keyword>
<keyword id="KW-0436">Ligase</keyword>
<keyword id="KW-0479">Metal-binding</keyword>
<keyword id="KW-0547">Nucleotide-binding</keyword>
<keyword id="KW-0648">Protein biosynthesis</keyword>
<keyword id="KW-1185">Reference proteome</keyword>
<keyword id="KW-0694">RNA-binding</keyword>
<keyword id="KW-0820">tRNA-binding</keyword>
<keyword id="KW-0862">Zinc</keyword>
<gene>
    <name evidence="1" type="primary">thrS</name>
    <name type="ordered locus">rrnAC3462</name>
</gene>
<dbReference type="EC" id="6.1.1.3" evidence="1"/>
<dbReference type="EMBL" id="AY596297">
    <property type="protein sequence ID" value="AAV48138.1"/>
    <property type="status" value="ALT_INIT"/>
    <property type="molecule type" value="Genomic_DNA"/>
</dbReference>
<dbReference type="RefSeq" id="WP_049939115.1">
    <property type="nucleotide sequence ID" value="NC_006396.1"/>
</dbReference>
<dbReference type="SMR" id="Q5UX65"/>
<dbReference type="STRING" id="272569.rrnAC3462"/>
<dbReference type="PaxDb" id="272569-rrnAC3462"/>
<dbReference type="EnsemblBacteria" id="AAV48138">
    <property type="protein sequence ID" value="AAV48138"/>
    <property type="gene ID" value="rrnAC3462"/>
</dbReference>
<dbReference type="GeneID" id="40154243"/>
<dbReference type="KEGG" id="hma:rrnAC3462"/>
<dbReference type="PATRIC" id="fig|272569.17.peg.3975"/>
<dbReference type="eggNOG" id="arCOG00401">
    <property type="taxonomic scope" value="Archaea"/>
</dbReference>
<dbReference type="HOGENOM" id="CLU_008554_0_1_2"/>
<dbReference type="Proteomes" id="UP000001169">
    <property type="component" value="Chromosome I"/>
</dbReference>
<dbReference type="GO" id="GO:0005737">
    <property type="term" value="C:cytoplasm"/>
    <property type="evidence" value="ECO:0007669"/>
    <property type="project" value="UniProtKB-SubCell"/>
</dbReference>
<dbReference type="GO" id="GO:0002161">
    <property type="term" value="F:aminoacyl-tRNA deacylase activity"/>
    <property type="evidence" value="ECO:0007669"/>
    <property type="project" value="UniProtKB-ARBA"/>
</dbReference>
<dbReference type="GO" id="GO:0005524">
    <property type="term" value="F:ATP binding"/>
    <property type="evidence" value="ECO:0007669"/>
    <property type="project" value="UniProtKB-UniRule"/>
</dbReference>
<dbReference type="GO" id="GO:0046872">
    <property type="term" value="F:metal ion binding"/>
    <property type="evidence" value="ECO:0007669"/>
    <property type="project" value="UniProtKB-KW"/>
</dbReference>
<dbReference type="GO" id="GO:0004829">
    <property type="term" value="F:threonine-tRNA ligase activity"/>
    <property type="evidence" value="ECO:0007669"/>
    <property type="project" value="UniProtKB-UniRule"/>
</dbReference>
<dbReference type="GO" id="GO:0000049">
    <property type="term" value="F:tRNA binding"/>
    <property type="evidence" value="ECO:0007669"/>
    <property type="project" value="UniProtKB-KW"/>
</dbReference>
<dbReference type="GO" id="GO:0006435">
    <property type="term" value="P:threonyl-tRNA aminoacylation"/>
    <property type="evidence" value="ECO:0007669"/>
    <property type="project" value="UniProtKB-UniRule"/>
</dbReference>
<dbReference type="CDD" id="cd01667">
    <property type="entry name" value="TGS_ThrRS"/>
    <property type="match status" value="1"/>
</dbReference>
<dbReference type="CDD" id="cd00860">
    <property type="entry name" value="ThrRS_anticodon"/>
    <property type="match status" value="1"/>
</dbReference>
<dbReference type="CDD" id="cd00771">
    <property type="entry name" value="ThrRS_core"/>
    <property type="match status" value="1"/>
</dbReference>
<dbReference type="FunFam" id="3.30.930.10:FF:000002">
    <property type="entry name" value="Threonine--tRNA ligase"/>
    <property type="match status" value="1"/>
</dbReference>
<dbReference type="FunFam" id="3.40.50.800:FF:000001">
    <property type="entry name" value="Threonine--tRNA ligase"/>
    <property type="match status" value="1"/>
</dbReference>
<dbReference type="FunFam" id="3.30.980.10:FF:000005">
    <property type="entry name" value="Threonyl-tRNA synthetase, mitochondrial"/>
    <property type="match status" value="1"/>
</dbReference>
<dbReference type="Gene3D" id="3.10.20.30">
    <property type="match status" value="1"/>
</dbReference>
<dbReference type="Gene3D" id="3.30.54.20">
    <property type="match status" value="1"/>
</dbReference>
<dbReference type="Gene3D" id="3.40.50.800">
    <property type="entry name" value="Anticodon-binding domain"/>
    <property type="match status" value="1"/>
</dbReference>
<dbReference type="Gene3D" id="3.30.930.10">
    <property type="entry name" value="Bira Bifunctional Protein, Domain 2"/>
    <property type="match status" value="1"/>
</dbReference>
<dbReference type="Gene3D" id="3.30.980.10">
    <property type="entry name" value="Threonyl-trna Synthetase, Chain A, domain 2"/>
    <property type="match status" value="1"/>
</dbReference>
<dbReference type="HAMAP" id="MF_00184">
    <property type="entry name" value="Thr_tRNA_synth"/>
    <property type="match status" value="1"/>
</dbReference>
<dbReference type="InterPro" id="IPR002314">
    <property type="entry name" value="aa-tRNA-synt_IIb"/>
</dbReference>
<dbReference type="InterPro" id="IPR006195">
    <property type="entry name" value="aa-tRNA-synth_II"/>
</dbReference>
<dbReference type="InterPro" id="IPR045864">
    <property type="entry name" value="aa-tRNA-synth_II/BPL/LPL"/>
</dbReference>
<dbReference type="InterPro" id="IPR004154">
    <property type="entry name" value="Anticodon-bd"/>
</dbReference>
<dbReference type="InterPro" id="IPR036621">
    <property type="entry name" value="Anticodon-bd_dom_sf"/>
</dbReference>
<dbReference type="InterPro" id="IPR012675">
    <property type="entry name" value="Beta-grasp_dom_sf"/>
</dbReference>
<dbReference type="InterPro" id="IPR004095">
    <property type="entry name" value="TGS"/>
</dbReference>
<dbReference type="InterPro" id="IPR012676">
    <property type="entry name" value="TGS-like"/>
</dbReference>
<dbReference type="InterPro" id="IPR002320">
    <property type="entry name" value="Thr-tRNA-ligase_IIa"/>
</dbReference>
<dbReference type="InterPro" id="IPR018163">
    <property type="entry name" value="Thr/Ala-tRNA-synth_IIc_edit"/>
</dbReference>
<dbReference type="InterPro" id="IPR047246">
    <property type="entry name" value="ThrRS_anticodon"/>
</dbReference>
<dbReference type="InterPro" id="IPR033728">
    <property type="entry name" value="ThrRS_core"/>
</dbReference>
<dbReference type="InterPro" id="IPR012947">
    <property type="entry name" value="tRNA_SAD"/>
</dbReference>
<dbReference type="NCBIfam" id="TIGR00418">
    <property type="entry name" value="thrS"/>
    <property type="match status" value="1"/>
</dbReference>
<dbReference type="PANTHER" id="PTHR11451:SF44">
    <property type="entry name" value="THREONINE--TRNA LIGASE, CHLOROPLASTIC_MITOCHONDRIAL 2"/>
    <property type="match status" value="1"/>
</dbReference>
<dbReference type="PANTHER" id="PTHR11451">
    <property type="entry name" value="THREONINE-TRNA LIGASE"/>
    <property type="match status" value="1"/>
</dbReference>
<dbReference type="Pfam" id="PF03129">
    <property type="entry name" value="HGTP_anticodon"/>
    <property type="match status" value="1"/>
</dbReference>
<dbReference type="Pfam" id="PF02824">
    <property type="entry name" value="TGS"/>
    <property type="match status" value="1"/>
</dbReference>
<dbReference type="Pfam" id="PF00587">
    <property type="entry name" value="tRNA-synt_2b"/>
    <property type="match status" value="1"/>
</dbReference>
<dbReference type="Pfam" id="PF07973">
    <property type="entry name" value="tRNA_SAD"/>
    <property type="match status" value="1"/>
</dbReference>
<dbReference type="PRINTS" id="PR01047">
    <property type="entry name" value="TRNASYNTHTHR"/>
</dbReference>
<dbReference type="SMART" id="SM00863">
    <property type="entry name" value="tRNA_SAD"/>
    <property type="match status" value="1"/>
</dbReference>
<dbReference type="SUPFAM" id="SSF52954">
    <property type="entry name" value="Class II aaRS ABD-related"/>
    <property type="match status" value="1"/>
</dbReference>
<dbReference type="SUPFAM" id="SSF55681">
    <property type="entry name" value="Class II aaRS and biotin synthetases"/>
    <property type="match status" value="1"/>
</dbReference>
<dbReference type="SUPFAM" id="SSF81271">
    <property type="entry name" value="TGS-like"/>
    <property type="match status" value="1"/>
</dbReference>
<dbReference type="SUPFAM" id="SSF55186">
    <property type="entry name" value="ThrRS/AlaRS common domain"/>
    <property type="match status" value="1"/>
</dbReference>
<dbReference type="PROSITE" id="PS50862">
    <property type="entry name" value="AA_TRNA_LIGASE_II"/>
    <property type="match status" value="1"/>
</dbReference>
<dbReference type="PROSITE" id="PS51880">
    <property type="entry name" value="TGS"/>
    <property type="match status" value="1"/>
</dbReference>
<name>SYT_HALMA</name>
<protein>
    <recommendedName>
        <fullName evidence="1">Threonine--tRNA ligase</fullName>
        <ecNumber evidence="1">6.1.1.3</ecNumber>
    </recommendedName>
    <alternativeName>
        <fullName evidence="1">Threonyl-tRNA synthetase</fullName>
        <shortName evidence="1">ThrRS</shortName>
    </alternativeName>
</protein>
<feature type="chain" id="PRO_0000101098" description="Threonine--tRNA ligase">
    <location>
        <begin position="1"/>
        <end position="642"/>
    </location>
</feature>
<feature type="domain" description="TGS" evidence="2">
    <location>
        <begin position="1"/>
        <end position="63"/>
    </location>
</feature>
<feature type="region of interest" description="Catalytic" evidence="1">
    <location>
        <begin position="242"/>
        <end position="533"/>
    </location>
</feature>
<feature type="binding site" evidence="1">
    <location>
        <position position="334"/>
    </location>
    <ligand>
        <name>Zn(2+)</name>
        <dbReference type="ChEBI" id="CHEBI:29105"/>
    </ligand>
</feature>
<feature type="binding site" evidence="1">
    <location>
        <position position="385"/>
    </location>
    <ligand>
        <name>Zn(2+)</name>
        <dbReference type="ChEBI" id="CHEBI:29105"/>
    </ligand>
</feature>
<feature type="binding site" evidence="1">
    <location>
        <position position="510"/>
    </location>
    <ligand>
        <name>Zn(2+)</name>
        <dbReference type="ChEBI" id="CHEBI:29105"/>
    </ligand>
</feature>
<sequence>MSTVTVTLPDGTPLEVERGSTVEDVAYEIGPGLGDDTVAGVVDGELVDKHAPLTADVELEIVTESSDEYLDVLRHSAAHVFAQALQRLYSDAKLTIGPWTDNGFYYDITGVDIDEDDLEAIEAEAEEIIEEDLDIERELVDRDDAFERYEDNQFKQDILETEAADDEEVSFYTQGEFEDLCQGPHVESTGEIGGFALLEISAAFWRGEEENETLTRVYGTAFPTEDALDEFLEQRRKAEERDHRKIGQEMDLFSIDETTGPGLPLYEPNGKKILNELSDYVAGLNRDAGYDEVETPHVFRTELWKKSGHYENYVDDMFLLDVNDEEYGLKPMNCPGHATIFEQNSWSYRDLPVRYFEDGKVYRKEQRGELSGLSRTWAFTIDDGHLFVRPDQIEEEVLATVDIILDTLDTFNLDYTVQFATRPEKSVGGDEIWEKAESQLESVLEEQDIDYVVEEGDGAFYGPKIDFAFEDALGRHWDGPTVQLDFNMPERFDLSYTGEDNEEHRPVMIHRALYGSYERFFMVLTEHYNGKFPPWLAPEQIRLLPVSDDNITYCEEIQDELDDFRVTIEDRSWTVGKKIQQAHDDRVPYMCVIGDNEEEAGTISVRDRKEREEKDIDIAEFRDHLETEVEQQRTAVTFLAGR</sequence>
<evidence type="ECO:0000255" key="1">
    <source>
        <dbReference type="HAMAP-Rule" id="MF_00184"/>
    </source>
</evidence>
<evidence type="ECO:0000255" key="2">
    <source>
        <dbReference type="PROSITE-ProRule" id="PRU01228"/>
    </source>
</evidence>
<evidence type="ECO:0000305" key="3"/>
<proteinExistence type="inferred from homology"/>
<reference key="1">
    <citation type="journal article" date="2004" name="Genome Res.">
        <title>Genome sequence of Haloarcula marismortui: a halophilic archaeon from the Dead Sea.</title>
        <authorList>
            <person name="Baliga N.S."/>
            <person name="Bonneau R."/>
            <person name="Facciotti M.T."/>
            <person name="Pan M."/>
            <person name="Glusman G."/>
            <person name="Deutsch E.W."/>
            <person name="Shannon P."/>
            <person name="Chiu Y."/>
            <person name="Weng R.S."/>
            <person name="Gan R.R."/>
            <person name="Hung P."/>
            <person name="Date S.V."/>
            <person name="Marcotte E."/>
            <person name="Hood L."/>
            <person name="Ng W.V."/>
        </authorList>
    </citation>
    <scope>NUCLEOTIDE SEQUENCE [LARGE SCALE GENOMIC DNA]</scope>
    <source>
        <strain>ATCC 43049 / DSM 3752 / JCM 8966 / VKM B-1809</strain>
    </source>
</reference>